<feature type="chain" id="PRO_0000201102" description="Fructose-1,6-bisphosphatase class 2">
    <location>
        <begin position="1"/>
        <end position="333"/>
    </location>
</feature>
<feature type="binding site" evidence="1">
    <location>
        <position position="33"/>
    </location>
    <ligand>
        <name>Mn(2+)</name>
        <dbReference type="ChEBI" id="CHEBI:29035"/>
        <label>1</label>
    </ligand>
</feature>
<feature type="binding site" evidence="1">
    <location>
        <position position="57"/>
    </location>
    <ligand>
        <name>Mn(2+)</name>
        <dbReference type="ChEBI" id="CHEBI:29035"/>
        <label>1</label>
    </ligand>
</feature>
<feature type="binding site" evidence="1">
    <location>
        <position position="85"/>
    </location>
    <ligand>
        <name>Mn(2+)</name>
        <dbReference type="ChEBI" id="CHEBI:29035"/>
        <label>2</label>
    </ligand>
</feature>
<feature type="binding site" evidence="1">
    <location>
        <begin position="88"/>
        <end position="90"/>
    </location>
    <ligand>
        <name>substrate</name>
    </ligand>
</feature>
<feature type="binding site" evidence="1">
    <location>
        <position position="88"/>
    </location>
    <ligand>
        <name>Mn(2+)</name>
        <dbReference type="ChEBI" id="CHEBI:29035"/>
        <label>2</label>
    </ligand>
</feature>
<feature type="binding site" evidence="1">
    <location>
        <position position="119"/>
    </location>
    <ligand>
        <name>substrate</name>
    </ligand>
</feature>
<feature type="binding site" evidence="1">
    <location>
        <begin position="164"/>
        <end position="166"/>
    </location>
    <ligand>
        <name>substrate</name>
    </ligand>
</feature>
<feature type="binding site" evidence="1">
    <location>
        <begin position="186"/>
        <end position="188"/>
    </location>
    <ligand>
        <name>substrate</name>
    </ligand>
</feature>
<feature type="binding site" evidence="1">
    <location>
        <position position="210"/>
    </location>
    <ligand>
        <name>substrate</name>
    </ligand>
</feature>
<feature type="binding site" evidence="1">
    <location>
        <position position="213"/>
    </location>
    <ligand>
        <name>Mn(2+)</name>
        <dbReference type="ChEBI" id="CHEBI:29035"/>
        <label>2</label>
    </ligand>
</feature>
<keyword id="KW-0119">Carbohydrate metabolism</keyword>
<keyword id="KW-0963">Cytoplasm</keyword>
<keyword id="KW-0378">Hydrolase</keyword>
<keyword id="KW-0464">Manganese</keyword>
<keyword id="KW-0479">Metal-binding</keyword>
<keyword id="KW-1185">Reference proteome</keyword>
<comment type="function">
    <text evidence="1">Catalyzes the hydrolysis of fructose 1,6-bisphosphate to fructose 6-phosphate.</text>
</comment>
<comment type="catalytic activity">
    <reaction>
        <text>beta-D-fructose 1,6-bisphosphate + H2O = beta-D-fructose 6-phosphate + phosphate</text>
        <dbReference type="Rhea" id="RHEA:11064"/>
        <dbReference type="ChEBI" id="CHEBI:15377"/>
        <dbReference type="ChEBI" id="CHEBI:32966"/>
        <dbReference type="ChEBI" id="CHEBI:43474"/>
        <dbReference type="ChEBI" id="CHEBI:57634"/>
        <dbReference type="EC" id="3.1.3.11"/>
    </reaction>
</comment>
<comment type="cofactor">
    <cofactor evidence="1">
        <name>Mn(2+)</name>
        <dbReference type="ChEBI" id="CHEBI:29035"/>
    </cofactor>
</comment>
<comment type="pathway">
    <text>Carbohydrate biosynthesis; gluconeogenesis.</text>
</comment>
<comment type="subcellular location">
    <subcellularLocation>
        <location evidence="1">Cytoplasm</location>
    </subcellularLocation>
</comment>
<comment type="similarity">
    <text evidence="2">Belongs to the FBPase class 2 family.</text>
</comment>
<proteinExistence type="inferred from homology"/>
<gene>
    <name type="primary">glpX</name>
    <name type="ordered locus">HI_0667</name>
</gene>
<accession>P44811</accession>
<organism>
    <name type="scientific">Haemophilus influenzae (strain ATCC 51907 / DSM 11121 / KW20 / Rd)</name>
    <dbReference type="NCBI Taxonomy" id="71421"/>
    <lineage>
        <taxon>Bacteria</taxon>
        <taxon>Pseudomonadati</taxon>
        <taxon>Pseudomonadota</taxon>
        <taxon>Gammaproteobacteria</taxon>
        <taxon>Pasteurellales</taxon>
        <taxon>Pasteurellaceae</taxon>
        <taxon>Haemophilus</taxon>
    </lineage>
</organism>
<reference key="1">
    <citation type="journal article" date="1995" name="Science">
        <title>Whole-genome random sequencing and assembly of Haemophilus influenzae Rd.</title>
        <authorList>
            <person name="Fleischmann R.D."/>
            <person name="Adams M.D."/>
            <person name="White O."/>
            <person name="Clayton R.A."/>
            <person name="Kirkness E.F."/>
            <person name="Kerlavage A.R."/>
            <person name="Bult C.J."/>
            <person name="Tomb J.-F."/>
            <person name="Dougherty B.A."/>
            <person name="Merrick J.M."/>
            <person name="McKenney K."/>
            <person name="Sutton G.G."/>
            <person name="FitzHugh W."/>
            <person name="Fields C.A."/>
            <person name="Gocayne J.D."/>
            <person name="Scott J.D."/>
            <person name="Shirley R."/>
            <person name="Liu L.-I."/>
            <person name="Glodek A."/>
            <person name="Kelley J.M."/>
            <person name="Weidman J.F."/>
            <person name="Phillips C.A."/>
            <person name="Spriggs T."/>
            <person name="Hedblom E."/>
            <person name="Cotton M.D."/>
            <person name="Utterback T.R."/>
            <person name="Hanna M.C."/>
            <person name="Nguyen D.T."/>
            <person name="Saudek D.M."/>
            <person name="Brandon R.C."/>
            <person name="Fine L.D."/>
            <person name="Fritchman J.L."/>
            <person name="Fuhrmann J.L."/>
            <person name="Geoghagen N.S.M."/>
            <person name="Gnehm C.L."/>
            <person name="McDonald L.A."/>
            <person name="Small K.V."/>
            <person name="Fraser C.M."/>
            <person name="Smith H.O."/>
            <person name="Venter J.C."/>
        </authorList>
    </citation>
    <scope>NUCLEOTIDE SEQUENCE [LARGE SCALE GENOMIC DNA]</scope>
    <source>
        <strain>ATCC 51907 / DSM 11121 / KW20 / Rd</strain>
    </source>
</reference>
<evidence type="ECO:0000250" key="1"/>
<evidence type="ECO:0000305" key="2"/>
<name>GLPX_HAEIN</name>
<dbReference type="EC" id="3.1.3.11"/>
<dbReference type="EMBL" id="L42023">
    <property type="protein sequence ID" value="AAC22322.1"/>
    <property type="molecule type" value="Genomic_DNA"/>
</dbReference>
<dbReference type="PIR" id="B64085">
    <property type="entry name" value="B64085"/>
</dbReference>
<dbReference type="RefSeq" id="NP_438827.1">
    <property type="nucleotide sequence ID" value="NC_000907.1"/>
</dbReference>
<dbReference type="SMR" id="P44811"/>
<dbReference type="STRING" id="71421.HI_0667"/>
<dbReference type="EnsemblBacteria" id="AAC22322">
    <property type="protein sequence ID" value="AAC22322"/>
    <property type="gene ID" value="HI_0667"/>
</dbReference>
<dbReference type="KEGG" id="hin:HI_0667"/>
<dbReference type="PATRIC" id="fig|71421.8.peg.697"/>
<dbReference type="eggNOG" id="COG1494">
    <property type="taxonomic scope" value="Bacteria"/>
</dbReference>
<dbReference type="HOGENOM" id="CLU_054938_0_0_6"/>
<dbReference type="OrthoDB" id="9779353at2"/>
<dbReference type="PhylomeDB" id="P44811"/>
<dbReference type="BioCyc" id="HINF71421:G1GJ1-702-MONOMER"/>
<dbReference type="UniPathway" id="UPA00138"/>
<dbReference type="Proteomes" id="UP000000579">
    <property type="component" value="Chromosome"/>
</dbReference>
<dbReference type="GO" id="GO:0005737">
    <property type="term" value="C:cytoplasm"/>
    <property type="evidence" value="ECO:0007669"/>
    <property type="project" value="UniProtKB-SubCell"/>
</dbReference>
<dbReference type="GO" id="GO:0042132">
    <property type="term" value="F:fructose 1,6-bisphosphate 1-phosphatase activity"/>
    <property type="evidence" value="ECO:0000318"/>
    <property type="project" value="GO_Central"/>
</dbReference>
<dbReference type="GO" id="GO:0046872">
    <property type="term" value="F:metal ion binding"/>
    <property type="evidence" value="ECO:0007669"/>
    <property type="project" value="UniProtKB-KW"/>
</dbReference>
<dbReference type="GO" id="GO:0030388">
    <property type="term" value="P:fructose 1,6-bisphosphate metabolic process"/>
    <property type="evidence" value="ECO:0000318"/>
    <property type="project" value="GO_Central"/>
</dbReference>
<dbReference type="GO" id="GO:0006094">
    <property type="term" value="P:gluconeogenesis"/>
    <property type="evidence" value="ECO:0000318"/>
    <property type="project" value="GO_Central"/>
</dbReference>
<dbReference type="GO" id="GO:0006071">
    <property type="term" value="P:glycerol metabolic process"/>
    <property type="evidence" value="ECO:0007669"/>
    <property type="project" value="InterPro"/>
</dbReference>
<dbReference type="CDD" id="cd01516">
    <property type="entry name" value="FBPase_glpX"/>
    <property type="match status" value="1"/>
</dbReference>
<dbReference type="FunFam" id="3.40.190.90:FF:000001">
    <property type="entry name" value="Fructose-1,6-bisphosphatase"/>
    <property type="match status" value="1"/>
</dbReference>
<dbReference type="Gene3D" id="3.40.190.90">
    <property type="match status" value="1"/>
</dbReference>
<dbReference type="Gene3D" id="3.30.540.10">
    <property type="entry name" value="Fructose-1,6-Bisphosphatase, subunit A, domain 1"/>
    <property type="match status" value="1"/>
</dbReference>
<dbReference type="InterPro" id="IPR004464">
    <property type="entry name" value="FBPase_class-2/SBPase"/>
</dbReference>
<dbReference type="NCBIfam" id="TIGR00330">
    <property type="entry name" value="glpX"/>
    <property type="match status" value="1"/>
</dbReference>
<dbReference type="PANTHER" id="PTHR30447:SF0">
    <property type="entry name" value="FRUCTOSE-1,6-BISPHOSPHATASE 1 CLASS 2-RELATED"/>
    <property type="match status" value="1"/>
</dbReference>
<dbReference type="PANTHER" id="PTHR30447">
    <property type="entry name" value="FRUCTOSE-1,6-BISPHOSPHATASE CLASS 2"/>
    <property type="match status" value="1"/>
</dbReference>
<dbReference type="Pfam" id="PF03320">
    <property type="entry name" value="FBPase_glpX"/>
    <property type="match status" value="1"/>
</dbReference>
<dbReference type="PIRSF" id="PIRSF004532">
    <property type="entry name" value="GlpX"/>
    <property type="match status" value="1"/>
</dbReference>
<dbReference type="SUPFAM" id="SSF56655">
    <property type="entry name" value="Carbohydrate phosphatase"/>
    <property type="match status" value="1"/>
</dbReference>
<sequence length="333" mass="35534">MNRALAIEFSRVTEAAALAAYTWLGRGDKNAADDAAVKAMRYMLNLIHMDAEIVIGEGEIDEAPMLYVGEKVGSGLGELVSIAVDPIDGTHMTAMGQSNAISVLAAGGKNTFLKAPDMYMEKLVVGSNVKGIIDLNLPLEQNLRRIASKLGKSLSDLTVMVLAKPRHDAVIKQIHNLGAKVLAIPDGDVAGSVLCCLPDAEVDLLYGIGGAPEGVAAAAAIRALGGDMQARLIPRNEVKSDTEENKKIAANEIQRCAALGVKVNEVLKLEDLVRDDNLVFTATGITNGDLLKGISRKGNLASTETILIRGKSRTIRKIQSIHYLDDLYKILNI</sequence>
<protein>
    <recommendedName>
        <fullName>Fructose-1,6-bisphosphatase class 2</fullName>
        <shortName>FBPase class 2</shortName>
        <ecNumber>3.1.3.11</ecNumber>
    </recommendedName>
    <alternativeName>
        <fullName>D-fructose-1,6-bisphosphate 1-phosphohydrolase class 2</fullName>
    </alternativeName>
</protein>